<organism>
    <name type="scientific">Bacillus cereus (strain AH820)</name>
    <dbReference type="NCBI Taxonomy" id="405535"/>
    <lineage>
        <taxon>Bacteria</taxon>
        <taxon>Bacillati</taxon>
        <taxon>Bacillota</taxon>
        <taxon>Bacilli</taxon>
        <taxon>Bacillales</taxon>
        <taxon>Bacillaceae</taxon>
        <taxon>Bacillus</taxon>
        <taxon>Bacillus cereus group</taxon>
    </lineage>
</organism>
<feature type="chain" id="PRO_1000187375" description="2,3-diketo-5-methylthiopentyl-1-phosphate enolase">
    <location>
        <begin position="1"/>
        <end position="414"/>
    </location>
</feature>
<feature type="active site" description="Proton acceptor" evidence="1">
    <location>
        <position position="99"/>
    </location>
</feature>
<feature type="binding site" evidence="1">
    <location>
        <position position="148"/>
    </location>
    <ligand>
        <name>substrate</name>
    </ligand>
</feature>
<feature type="binding site" evidence="1">
    <location>
        <begin position="174"/>
        <end position="177"/>
    </location>
    <ligand>
        <name>substrate</name>
    </ligand>
</feature>
<feature type="binding site" description="via carbamate group" evidence="1">
    <location>
        <position position="174"/>
    </location>
    <ligand>
        <name>Mg(2+)</name>
        <dbReference type="ChEBI" id="CHEBI:18420"/>
    </ligand>
</feature>
<feature type="binding site" evidence="1">
    <location>
        <position position="176"/>
    </location>
    <ligand>
        <name>Mg(2+)</name>
        <dbReference type="ChEBI" id="CHEBI:18420"/>
    </ligand>
</feature>
<feature type="binding site" evidence="1">
    <location>
        <position position="177"/>
    </location>
    <ligand>
        <name>Mg(2+)</name>
        <dbReference type="ChEBI" id="CHEBI:18420"/>
    </ligand>
</feature>
<feature type="binding site" evidence="1">
    <location>
        <position position="265"/>
    </location>
    <ligand>
        <name>substrate</name>
    </ligand>
</feature>
<feature type="binding site" evidence="1">
    <location>
        <position position="338"/>
    </location>
    <ligand>
        <name>substrate</name>
    </ligand>
</feature>
<feature type="binding site" evidence="1">
    <location>
        <begin position="360"/>
        <end position="361"/>
    </location>
    <ligand>
        <name>substrate</name>
    </ligand>
</feature>
<feature type="modified residue" description="N6-carboxylysine" evidence="1">
    <location>
        <position position="174"/>
    </location>
</feature>
<reference key="1">
    <citation type="submission" date="2008-10" db="EMBL/GenBank/DDBJ databases">
        <title>Genome sequence of Bacillus cereus AH820.</title>
        <authorList>
            <person name="Dodson R.J."/>
            <person name="Durkin A.S."/>
            <person name="Rosovitz M.J."/>
            <person name="Rasko D.A."/>
            <person name="Hoffmaster A."/>
            <person name="Ravel J."/>
            <person name="Sutton G."/>
        </authorList>
    </citation>
    <scope>NUCLEOTIDE SEQUENCE [LARGE SCALE GENOMIC DNA]</scope>
    <source>
        <strain>AH820</strain>
    </source>
</reference>
<keyword id="KW-0028">Amino-acid biosynthesis</keyword>
<keyword id="KW-0413">Isomerase</keyword>
<keyword id="KW-0460">Magnesium</keyword>
<keyword id="KW-0479">Metal-binding</keyword>
<keyword id="KW-0486">Methionine biosynthesis</keyword>
<gene>
    <name evidence="1" type="primary">mtnW</name>
    <name type="ordered locus">BCAH820_4057</name>
</gene>
<sequence length="414" mass="45539">MSGIIATYLIHDDSHNLEKKAEQIALGLTIGSWTHLPHLLQEQLKQHKGNVLHVEELAEHEHTNSYLRKKVKRGIIKIEYPLLNFSPDLPAILTTTFGKLSLDGEVKLIDLTFSDELKKHFPGPKFGIDGIRNLLQVHDRPLLMSIFKGMIGRNIGYLKTQLRDQAIGGVDIVKDDEILFENALTPLTKRIVSGKEVLQSVYETYGHKTLYAVNVTGRTFDLKENAKRAVQAGADILLFNVFAYGLDVLQSLAEDDEIPVPIMAHPAVSGAYSASKLYGISSPLLLGKLLRYAGADFSLFPSPYGSVALEKEEALAISKYLTEDDVFFKKSFSVPSAGIHPGFVPFIIRDFGKDVVINAGGGIHGHPNGAQGGGKAFRTAIDATLQNKPLHEVDDINLHSALQIWGNPSHEVKL</sequence>
<name>MTNW_BACC0</name>
<comment type="function">
    <text evidence="1">Catalyzes the enolization of 2,3-diketo-5-methylthiopentyl-1-phosphate (DK-MTP-1-P) into 2-hydroxy-3-keto-5-methylthiopentenyl-1-phosphate (HK-MTPenyl-1-P).</text>
</comment>
<comment type="catalytic activity">
    <reaction evidence="1">
        <text>5-methylsulfanyl-2,3-dioxopentyl phosphate = 2-hydroxy-5-methylsulfanyl-3-oxopent-1-enyl phosphate</text>
        <dbReference type="Rhea" id="RHEA:18769"/>
        <dbReference type="ChEBI" id="CHEBI:58828"/>
        <dbReference type="ChEBI" id="CHEBI:59505"/>
        <dbReference type="EC" id="5.3.2.5"/>
    </reaction>
</comment>
<comment type="cofactor">
    <cofactor evidence="1">
        <name>Mg(2+)</name>
        <dbReference type="ChEBI" id="CHEBI:18420"/>
    </cofactor>
    <text evidence="1">Binds 1 Mg(2+) ion per subunit.</text>
</comment>
<comment type="pathway">
    <text evidence="1">Amino-acid biosynthesis; L-methionine biosynthesis via salvage pathway; L-methionine from S-methyl-5-thio-alpha-D-ribose 1-phosphate: step 3/6.</text>
</comment>
<comment type="subunit">
    <text evidence="1">Homodimer.</text>
</comment>
<comment type="miscellaneous">
    <text evidence="1">Has no RuBP-carboxylation activity.</text>
</comment>
<comment type="similarity">
    <text evidence="1">Belongs to the RuBisCO large chain family. Type IV subfamily.</text>
</comment>
<protein>
    <recommendedName>
        <fullName evidence="1">2,3-diketo-5-methylthiopentyl-1-phosphate enolase</fullName>
        <shortName evidence="1">DK-MTP-1-P enolase</shortName>
        <ecNumber evidence="1">5.3.2.5</ecNumber>
    </recommendedName>
    <alternativeName>
        <fullName evidence="1">RuBisCO-like protein</fullName>
        <shortName evidence="1">RLP</shortName>
    </alternativeName>
</protein>
<evidence type="ECO:0000255" key="1">
    <source>
        <dbReference type="HAMAP-Rule" id="MF_01679"/>
    </source>
</evidence>
<dbReference type="EC" id="5.3.2.5" evidence="1"/>
<dbReference type="EMBL" id="CP001283">
    <property type="protein sequence ID" value="ACK87210.1"/>
    <property type="molecule type" value="Genomic_DNA"/>
</dbReference>
<dbReference type="RefSeq" id="WP_000014199.1">
    <property type="nucleotide sequence ID" value="NC_011773.1"/>
</dbReference>
<dbReference type="SMR" id="B7JL16"/>
<dbReference type="KEGG" id="bcu:BCAH820_4057"/>
<dbReference type="HOGENOM" id="CLU_031450_3_1_9"/>
<dbReference type="UniPathway" id="UPA00904">
    <property type="reaction ID" value="UER00876"/>
</dbReference>
<dbReference type="Proteomes" id="UP000001363">
    <property type="component" value="Chromosome"/>
</dbReference>
<dbReference type="GO" id="GO:0043715">
    <property type="term" value="F:2,3-diketo-5-methylthiopentyl-1-phosphate enolase activity"/>
    <property type="evidence" value="ECO:0007669"/>
    <property type="project" value="UniProtKB-UniRule"/>
</dbReference>
<dbReference type="GO" id="GO:0000287">
    <property type="term" value="F:magnesium ion binding"/>
    <property type="evidence" value="ECO:0007669"/>
    <property type="project" value="UniProtKB-UniRule"/>
</dbReference>
<dbReference type="GO" id="GO:0016984">
    <property type="term" value="F:ribulose-bisphosphate carboxylase activity"/>
    <property type="evidence" value="ECO:0007669"/>
    <property type="project" value="InterPro"/>
</dbReference>
<dbReference type="GO" id="GO:0015977">
    <property type="term" value="P:carbon fixation"/>
    <property type="evidence" value="ECO:0007669"/>
    <property type="project" value="InterPro"/>
</dbReference>
<dbReference type="GO" id="GO:0019509">
    <property type="term" value="P:L-methionine salvage from methylthioadenosine"/>
    <property type="evidence" value="ECO:0007669"/>
    <property type="project" value="UniProtKB-UniRule"/>
</dbReference>
<dbReference type="CDD" id="cd08209">
    <property type="entry name" value="RLP_DK-MTP-1-P-enolase"/>
    <property type="match status" value="1"/>
</dbReference>
<dbReference type="FunFam" id="3.20.20.110:FF:000002">
    <property type="entry name" value="2,3-diketo-5-methylthiopentyl-1-phosphate enolase"/>
    <property type="match status" value="1"/>
</dbReference>
<dbReference type="Gene3D" id="3.20.20.110">
    <property type="entry name" value="Ribulose bisphosphate carboxylase, large subunit, C-terminal domain"/>
    <property type="match status" value="1"/>
</dbReference>
<dbReference type="Gene3D" id="3.30.70.150">
    <property type="entry name" value="RuBisCO large subunit, N-terminal domain"/>
    <property type="match status" value="1"/>
</dbReference>
<dbReference type="HAMAP" id="MF_01679">
    <property type="entry name" value="Salvage_MtnW"/>
    <property type="match status" value="1"/>
</dbReference>
<dbReference type="InterPro" id="IPR017717">
    <property type="entry name" value="Diketo-Methiopentyl-P_enolase"/>
</dbReference>
<dbReference type="InterPro" id="IPR033966">
    <property type="entry name" value="RuBisCO"/>
</dbReference>
<dbReference type="InterPro" id="IPR000685">
    <property type="entry name" value="RuBisCO_lsu_C"/>
</dbReference>
<dbReference type="InterPro" id="IPR036376">
    <property type="entry name" value="RuBisCO_lsu_C_sf"/>
</dbReference>
<dbReference type="InterPro" id="IPR017443">
    <property type="entry name" value="RuBisCO_lsu_fd_N"/>
</dbReference>
<dbReference type="InterPro" id="IPR036422">
    <property type="entry name" value="RuBisCO_lsu_N_sf"/>
</dbReference>
<dbReference type="NCBIfam" id="NF007095">
    <property type="entry name" value="PRK09549.1"/>
    <property type="match status" value="1"/>
</dbReference>
<dbReference type="NCBIfam" id="TIGR03332">
    <property type="entry name" value="salvage_mtnW"/>
    <property type="match status" value="1"/>
</dbReference>
<dbReference type="PANTHER" id="PTHR42704">
    <property type="entry name" value="RIBULOSE BISPHOSPHATE CARBOXYLASE"/>
    <property type="match status" value="1"/>
</dbReference>
<dbReference type="PANTHER" id="PTHR42704:SF17">
    <property type="entry name" value="RIBULOSE BISPHOSPHATE CARBOXYLASE LARGE CHAIN"/>
    <property type="match status" value="1"/>
</dbReference>
<dbReference type="Pfam" id="PF00016">
    <property type="entry name" value="RuBisCO_large"/>
    <property type="match status" value="1"/>
</dbReference>
<dbReference type="Pfam" id="PF02788">
    <property type="entry name" value="RuBisCO_large_N"/>
    <property type="match status" value="1"/>
</dbReference>
<dbReference type="SFLD" id="SFLDF00157">
    <property type="entry name" value="2_3-diketo-5-methylthiopentyl"/>
    <property type="match status" value="1"/>
</dbReference>
<dbReference type="SFLD" id="SFLDS00014">
    <property type="entry name" value="RuBisCO"/>
    <property type="match status" value="1"/>
</dbReference>
<dbReference type="SUPFAM" id="SSF51649">
    <property type="entry name" value="RuBisCo, C-terminal domain"/>
    <property type="match status" value="1"/>
</dbReference>
<dbReference type="SUPFAM" id="SSF54966">
    <property type="entry name" value="RuBisCO, large subunit, small (N-terminal) domain"/>
    <property type="match status" value="1"/>
</dbReference>
<accession>B7JL16</accession>
<proteinExistence type="inferred from homology"/>